<accession>P0A4P0</accession>
<accession>Q02VA8</accession>
<accession>Q07743</accession>
<gene>
    <name evidence="5" type="primary">oppC</name>
    <name type="ordered locus">LACR_D18</name>
</gene>
<protein>
    <recommendedName>
        <fullName evidence="6">Oligopeptide transport system permease protein OppC</fullName>
    </recommendedName>
</protein>
<organism>
    <name type="scientific">Lactococcus lactis subsp. cremoris (strain SK11)</name>
    <dbReference type="NCBI Taxonomy" id="272622"/>
    <lineage>
        <taxon>Bacteria</taxon>
        <taxon>Bacillati</taxon>
        <taxon>Bacillota</taxon>
        <taxon>Bacilli</taxon>
        <taxon>Lactobacillales</taxon>
        <taxon>Streptococcaceae</taxon>
        <taxon>Lactococcus</taxon>
        <taxon>Lactococcus cremoris subsp. cremoris</taxon>
    </lineage>
</organism>
<comment type="function">
    <text evidence="1">Part of the ABC transporter complex OppABCDF involved in the uptake of oligopeptides (By similarity). Probably responsible for the translocation of the substrate across the membrane (By similarity).</text>
</comment>
<comment type="subunit">
    <text evidence="1">The complex is composed of two ATP-binding proteins (OppD and OppF), two transmembrane proteins (OppB and OppC) and a solute-binding protein (OppA).</text>
</comment>
<comment type="subcellular location">
    <subcellularLocation>
        <location evidence="2">Cell membrane</location>
        <topology evidence="3">Multi-pass membrane protein</topology>
    </subcellularLocation>
</comment>
<comment type="similarity">
    <text evidence="6">Belongs to the binding-protein-dependent transport system permease family. OppBC subfamily.</text>
</comment>
<geneLocation type="plasmid">
    <name>pSK11L</name>
</geneLocation>
<geneLocation type="plasmid">
    <name>pLACR4</name>
</geneLocation>
<feature type="chain" id="PRO_0000060138" description="Oligopeptide transport system permease protein OppC">
    <location>
        <begin position="1"/>
        <end position="294"/>
    </location>
</feature>
<feature type="transmembrane region" description="Helical" evidence="4">
    <location>
        <begin position="27"/>
        <end position="47"/>
    </location>
</feature>
<feature type="transmembrane region" description="Helical" evidence="4">
    <location>
        <begin position="94"/>
        <end position="114"/>
    </location>
</feature>
<feature type="transmembrane region" description="Helical" evidence="4">
    <location>
        <begin position="127"/>
        <end position="147"/>
    </location>
</feature>
<feature type="transmembrane region" description="Helical" evidence="4">
    <location>
        <begin position="151"/>
        <end position="171"/>
    </location>
</feature>
<feature type="transmembrane region" description="Helical" evidence="4">
    <location>
        <begin position="202"/>
        <end position="224"/>
    </location>
</feature>
<feature type="transmembrane region" description="Helical" evidence="4">
    <location>
        <begin position="260"/>
        <end position="280"/>
    </location>
</feature>
<feature type="domain" description="ABC transmembrane type-1" evidence="4">
    <location>
        <begin position="88"/>
        <end position="280"/>
    </location>
</feature>
<feature type="sequence conflict" description="In Ref. 1; AAA25166/AAB00536." evidence="6" ref="1">
    <original>T</original>
    <variation>N</variation>
    <location>
        <position position="67"/>
    </location>
</feature>
<feature type="sequence conflict" description="In Ref. 1; AAA25166/AAB00536." evidence="6" ref="1">
    <original>Q</original>
    <variation>R</variation>
    <location>
        <position position="185"/>
    </location>
</feature>
<evidence type="ECO:0000250" key="1">
    <source>
        <dbReference type="UniProtKB" id="P0A4N9"/>
    </source>
</evidence>
<evidence type="ECO:0000250" key="2">
    <source>
        <dbReference type="UniProtKB" id="P24139"/>
    </source>
</evidence>
<evidence type="ECO:0000255" key="3"/>
<evidence type="ECO:0000255" key="4">
    <source>
        <dbReference type="PROSITE-ProRule" id="PRU00441"/>
    </source>
</evidence>
<evidence type="ECO:0000303" key="5">
    <source>
    </source>
</evidence>
<evidence type="ECO:0000305" key="6"/>
<dbReference type="EMBL" id="U09553">
    <property type="protein sequence ID" value="AAB00536.1"/>
    <property type="molecule type" value="Unassigned_DNA"/>
</dbReference>
<dbReference type="EMBL" id="M76471">
    <property type="protein sequence ID" value="AAA25166.1"/>
    <property type="molecule type" value="Genomic_DNA"/>
</dbReference>
<dbReference type="EMBL" id="CP000429">
    <property type="protein sequence ID" value="ABJ74114.1"/>
    <property type="molecule type" value="Genomic_DNA"/>
</dbReference>
<dbReference type="RefSeq" id="WP_011669111.1">
    <property type="nucleotide sequence ID" value="NC_008506.1"/>
</dbReference>
<dbReference type="SMR" id="P0A4P0"/>
<dbReference type="KEGG" id="llc:LACR_D18"/>
<dbReference type="HOGENOM" id="CLU_028518_1_4_9"/>
<dbReference type="Proteomes" id="UP000000240">
    <property type="component" value="Plasmid pLACR4"/>
</dbReference>
<dbReference type="GO" id="GO:0005886">
    <property type="term" value="C:plasma membrane"/>
    <property type="evidence" value="ECO:0007669"/>
    <property type="project" value="UniProtKB-SubCell"/>
</dbReference>
<dbReference type="GO" id="GO:0015833">
    <property type="term" value="P:peptide transport"/>
    <property type="evidence" value="ECO:0007669"/>
    <property type="project" value="UniProtKB-KW"/>
</dbReference>
<dbReference type="GO" id="GO:0015031">
    <property type="term" value="P:protein transport"/>
    <property type="evidence" value="ECO:0007669"/>
    <property type="project" value="UniProtKB-KW"/>
</dbReference>
<dbReference type="GO" id="GO:0055085">
    <property type="term" value="P:transmembrane transport"/>
    <property type="evidence" value="ECO:0007669"/>
    <property type="project" value="InterPro"/>
</dbReference>
<dbReference type="CDD" id="cd06261">
    <property type="entry name" value="TM_PBP2"/>
    <property type="match status" value="1"/>
</dbReference>
<dbReference type="Gene3D" id="1.10.3720.10">
    <property type="entry name" value="MetI-like"/>
    <property type="match status" value="1"/>
</dbReference>
<dbReference type="InterPro" id="IPR050366">
    <property type="entry name" value="BP-dependent_transpt_permease"/>
</dbReference>
<dbReference type="InterPro" id="IPR000515">
    <property type="entry name" value="MetI-like"/>
</dbReference>
<dbReference type="InterPro" id="IPR035906">
    <property type="entry name" value="MetI-like_sf"/>
</dbReference>
<dbReference type="PANTHER" id="PTHR43386:SF1">
    <property type="entry name" value="D,D-DIPEPTIDE TRANSPORT SYSTEM PERMEASE PROTEIN DDPC-RELATED"/>
    <property type="match status" value="1"/>
</dbReference>
<dbReference type="PANTHER" id="PTHR43386">
    <property type="entry name" value="OLIGOPEPTIDE TRANSPORT SYSTEM PERMEASE PROTEIN APPC"/>
    <property type="match status" value="1"/>
</dbReference>
<dbReference type="Pfam" id="PF00528">
    <property type="entry name" value="BPD_transp_1"/>
    <property type="match status" value="1"/>
</dbReference>
<dbReference type="SUPFAM" id="SSF161098">
    <property type="entry name" value="MetI-like"/>
    <property type="match status" value="1"/>
</dbReference>
<dbReference type="PROSITE" id="PS50928">
    <property type="entry name" value="ABC_TM1"/>
    <property type="match status" value="1"/>
</dbReference>
<reference key="1">
    <citation type="journal article" date="1995" name="Dev. Biol. Stand.">
        <title>Plasmid-mediated oligopeptide transport system in lactococci.</title>
        <authorList>
            <person name="Yu W."/>
            <person name="Gillies K."/>
            <person name="Kondo J.K."/>
            <person name="Broadbent J.R."/>
            <person name="McKay L.L."/>
        </authorList>
    </citation>
    <scope>NUCLEOTIDE SEQUENCE [GENOMIC DNA]</scope>
    <source>
        <plasmid>pSK11L</plasmid>
    </source>
</reference>
<reference key="2">
    <citation type="journal article" date="2006" name="Proc. Natl. Acad. Sci. U.S.A.">
        <title>Comparative genomics of the lactic acid bacteria.</title>
        <authorList>
            <person name="Makarova K.S."/>
            <person name="Slesarev A."/>
            <person name="Wolf Y.I."/>
            <person name="Sorokin A."/>
            <person name="Mirkin B."/>
            <person name="Koonin E.V."/>
            <person name="Pavlov A."/>
            <person name="Pavlova N."/>
            <person name="Karamychev V."/>
            <person name="Polouchine N."/>
            <person name="Shakhova V."/>
            <person name="Grigoriev I."/>
            <person name="Lou Y."/>
            <person name="Rohksar D."/>
            <person name="Lucas S."/>
            <person name="Huang K."/>
            <person name="Goodstein D.M."/>
            <person name="Hawkins T."/>
            <person name="Plengvidhya V."/>
            <person name="Welker D."/>
            <person name="Hughes J."/>
            <person name="Goh Y."/>
            <person name="Benson A."/>
            <person name="Baldwin K."/>
            <person name="Lee J.-H."/>
            <person name="Diaz-Muniz I."/>
            <person name="Dosti B."/>
            <person name="Smeianov V."/>
            <person name="Wechter W."/>
            <person name="Barabote R."/>
            <person name="Lorca G."/>
            <person name="Altermann E."/>
            <person name="Barrangou R."/>
            <person name="Ganesan B."/>
            <person name="Xie Y."/>
            <person name="Rawsthorne H."/>
            <person name="Tamir D."/>
            <person name="Parker C."/>
            <person name="Breidt F."/>
            <person name="Broadbent J.R."/>
            <person name="Hutkins R."/>
            <person name="O'Sullivan D."/>
            <person name="Steele J."/>
            <person name="Unlu G."/>
            <person name="Saier M.H. Jr."/>
            <person name="Klaenhammer T."/>
            <person name="Richardson P."/>
            <person name="Kozyavkin S."/>
            <person name="Weimer B.C."/>
            <person name="Mills D.A."/>
        </authorList>
    </citation>
    <scope>NUCLEOTIDE SEQUENCE [LARGE SCALE GENOMIC DNA]</scope>
    <source>
        <strain>SK11</strain>
        <plasmid>pLACR4</plasmid>
    </source>
</reference>
<name>OPPC_LACLS</name>
<proteinExistence type="inferred from homology"/>
<keyword id="KW-1003">Cell membrane</keyword>
<keyword id="KW-0472">Membrane</keyword>
<keyword id="KW-0571">Peptide transport</keyword>
<keyword id="KW-0614">Plasmid</keyword>
<keyword id="KW-0653">Protein transport</keyword>
<keyword id="KW-0812">Transmembrane</keyword>
<keyword id="KW-1133">Transmembrane helix</keyword>
<keyword id="KW-0813">Transport</keyword>
<sequence length="294" mass="32794">MTEKKHKNSLSLVHSIKEELKKDKLAMISTIFLVAVFLIVYIYSMFLKQSNYVDVNIMDQYLAPLTTGHLLGTDNGGRDIIMMLMISARNSFNIAFAVTLITLVVGNILGVITGYFGGRFDLIFMRFTDFVMILPSMMIIIVFVTIIPRFNSWSLIGIISIFSWIGTTRLIRARTMTEVNRDYVQASKTSGTSDFKIMFREIWPNLSTLVIAEATLVFAGNIGLETGLSFLGFGLPAGTPSLGTMINEATNPETMTDKPWTWVPATVVILIVVLAIIFIGNALRRVADQRQATR</sequence>